<gene>
    <name type="primary">Cyp11b3</name>
    <name type="synonym">Cyp11b-3</name>
</gene>
<keyword id="KW-0903">Direct protein sequencing</keyword>
<keyword id="KW-0349">Heme</keyword>
<keyword id="KW-0408">Iron</keyword>
<keyword id="KW-0472">Membrane</keyword>
<keyword id="KW-0479">Metal-binding</keyword>
<keyword id="KW-0496">Mitochondrion</keyword>
<keyword id="KW-0503">Monooxygenase</keyword>
<keyword id="KW-0560">Oxidoreductase</keyword>
<keyword id="KW-1185">Reference proteome</keyword>
<keyword id="KW-0755">Steroidogenesis</keyword>
<keyword id="KW-0809">Transit peptide</keyword>
<feature type="transit peptide" description="Mitochondrion" evidence="4">
    <location>
        <begin position="1"/>
        <end position="24"/>
    </location>
</feature>
<feature type="chain" id="PRO_0000003605" description="Cytochrome P450 11B3, mitochondrial">
    <location>
        <begin position="25"/>
        <end position="500"/>
    </location>
</feature>
<feature type="binding site" description="axial binding residue" evidence="1">
    <location>
        <position position="447"/>
    </location>
    <ligand>
        <name>heme</name>
        <dbReference type="ChEBI" id="CHEBI:30413"/>
    </ligand>
    <ligandPart>
        <name>Fe</name>
        <dbReference type="ChEBI" id="CHEBI:18248"/>
    </ligandPart>
</feature>
<feature type="sequence conflict" description="In Ref. 3; CAA36978 and 4; BAA03172." evidence="8" ref="3 4">
    <original>K</original>
    <variation>E</variation>
    <location>
        <position position="310"/>
    </location>
</feature>
<evidence type="ECO:0000250" key="1"/>
<evidence type="ECO:0000250" key="2">
    <source>
        <dbReference type="UniProtKB" id="P15538"/>
    </source>
</evidence>
<evidence type="ECO:0000250" key="3">
    <source>
        <dbReference type="UniProtKB" id="P19099"/>
    </source>
</evidence>
<evidence type="ECO:0000269" key="4">
    <source>
    </source>
</evidence>
<evidence type="ECO:0000269" key="5">
    <source>
    </source>
</evidence>
<evidence type="ECO:0000303" key="6">
    <source>
    </source>
</evidence>
<evidence type="ECO:0000303" key="7">
    <source>
    </source>
</evidence>
<evidence type="ECO:0000305" key="8"/>
<evidence type="ECO:0000305" key="9">
    <source>
    </source>
</evidence>
<name>C11B3_RAT</name>
<organism>
    <name type="scientific">Rattus norvegicus</name>
    <name type="common">Rat</name>
    <dbReference type="NCBI Taxonomy" id="10116"/>
    <lineage>
        <taxon>Eukaryota</taxon>
        <taxon>Metazoa</taxon>
        <taxon>Chordata</taxon>
        <taxon>Craniata</taxon>
        <taxon>Vertebrata</taxon>
        <taxon>Euteleostomi</taxon>
        <taxon>Mammalia</taxon>
        <taxon>Eutheria</taxon>
        <taxon>Euarchontoglires</taxon>
        <taxon>Glires</taxon>
        <taxon>Rodentia</taxon>
        <taxon>Myomorpha</taxon>
        <taxon>Muroidea</taxon>
        <taxon>Muridae</taxon>
        <taxon>Murinae</taxon>
        <taxon>Rattus</taxon>
    </lineage>
</organism>
<proteinExistence type="evidence at protein level"/>
<comment type="function">
    <text evidence="2 5">A cytochrome P450 monooxygenase involved in the biosynthesis of adrenal corticoids (PubMed:8674838). Catalyzes the hydroxylation of steroids at 11beta, 18- or 19-positions, with preferred regioselectivity at 11beta and 18 (PubMed:8674838). Converts 11-deoxycorticosterone into corticosterone, 18-hydroxy-11-deoxycorticosterone, and/or 19-hydroxy-11-deoxycorticosterone, but not to 18-hydroxycorticosterone or aldosterone (PubMed:8674838). Mechanistically, uses molecular oxygen inserting one oxygen atom into a substrate for hydroxylation and reducing the second into a water molecule. Two electrons are provided by NADPH via a two-protein mitochondrial transfer system comprising flavoprotein FDXR (adrenodoxin/ferredoxin reductase) and nonheme iron-sulfur protein FDX1 or FDX2 (adrenodoxin/ferredoxin) (By similarity).</text>
</comment>
<comment type="catalytic activity">
    <reaction evidence="5">
        <text>a steroid + 2 reduced [adrenodoxin] + O2 + 2 H(+) = an 11beta-hydroxysteroid + 2 oxidized [adrenodoxin] + H2O</text>
        <dbReference type="Rhea" id="RHEA:15629"/>
        <dbReference type="Rhea" id="RHEA-COMP:9998"/>
        <dbReference type="Rhea" id="RHEA-COMP:9999"/>
        <dbReference type="ChEBI" id="CHEBI:15377"/>
        <dbReference type="ChEBI" id="CHEBI:15378"/>
        <dbReference type="ChEBI" id="CHEBI:15379"/>
        <dbReference type="ChEBI" id="CHEBI:33737"/>
        <dbReference type="ChEBI" id="CHEBI:33738"/>
        <dbReference type="ChEBI" id="CHEBI:35341"/>
        <dbReference type="ChEBI" id="CHEBI:35346"/>
        <dbReference type="EC" id="1.14.15.4"/>
    </reaction>
    <physiologicalReaction direction="left-to-right" evidence="9">
        <dbReference type="Rhea" id="RHEA:15630"/>
    </physiologicalReaction>
</comment>
<comment type="catalytic activity">
    <reaction evidence="5">
        <text>21-hydroxyprogesterone + 2 reduced [adrenodoxin] + O2 + 2 H(+) = corticosterone + 2 oxidized [adrenodoxin] + H2O</text>
        <dbReference type="Rhea" id="RHEA:46104"/>
        <dbReference type="Rhea" id="RHEA-COMP:9998"/>
        <dbReference type="Rhea" id="RHEA-COMP:9999"/>
        <dbReference type="ChEBI" id="CHEBI:15377"/>
        <dbReference type="ChEBI" id="CHEBI:15378"/>
        <dbReference type="ChEBI" id="CHEBI:15379"/>
        <dbReference type="ChEBI" id="CHEBI:16827"/>
        <dbReference type="ChEBI" id="CHEBI:16973"/>
        <dbReference type="ChEBI" id="CHEBI:33737"/>
        <dbReference type="ChEBI" id="CHEBI:33738"/>
    </reaction>
    <physiologicalReaction direction="left-to-right" evidence="9">
        <dbReference type="Rhea" id="RHEA:46105"/>
    </physiologicalReaction>
</comment>
<comment type="catalytic activity">
    <reaction evidence="5">
        <text>21-hydroxyprogesterone + 2 reduced [adrenodoxin] + O2 + 2 H(+) = 18-hydroxy-11-deoxycorticosterone + 2 oxidized [adrenodoxin] + H2O</text>
        <dbReference type="Rhea" id="RHEA:76151"/>
        <dbReference type="Rhea" id="RHEA-COMP:9998"/>
        <dbReference type="Rhea" id="RHEA-COMP:9999"/>
        <dbReference type="ChEBI" id="CHEBI:15377"/>
        <dbReference type="ChEBI" id="CHEBI:15378"/>
        <dbReference type="ChEBI" id="CHEBI:15379"/>
        <dbReference type="ChEBI" id="CHEBI:16973"/>
        <dbReference type="ChEBI" id="CHEBI:33737"/>
        <dbReference type="ChEBI" id="CHEBI:33738"/>
        <dbReference type="ChEBI" id="CHEBI:195166"/>
    </reaction>
    <physiologicalReaction direction="left-to-right" evidence="9">
        <dbReference type="Rhea" id="RHEA:76152"/>
    </physiologicalReaction>
</comment>
<comment type="catalytic activity">
    <reaction evidence="5">
        <text>21-hydroxyprogesterone + 2 reduced [adrenodoxin] + O2 + 2 H(+) = 19-hydroxy-11-deoxycorticosterone + 2 oxidized [adrenodoxin] + H2O</text>
        <dbReference type="Rhea" id="RHEA:76155"/>
        <dbReference type="Rhea" id="RHEA-COMP:9998"/>
        <dbReference type="Rhea" id="RHEA-COMP:9999"/>
        <dbReference type="ChEBI" id="CHEBI:15377"/>
        <dbReference type="ChEBI" id="CHEBI:15378"/>
        <dbReference type="ChEBI" id="CHEBI:15379"/>
        <dbReference type="ChEBI" id="CHEBI:16973"/>
        <dbReference type="ChEBI" id="CHEBI:33737"/>
        <dbReference type="ChEBI" id="CHEBI:33738"/>
        <dbReference type="ChEBI" id="CHEBI:195167"/>
    </reaction>
    <physiologicalReaction direction="left-to-right" evidence="9">
        <dbReference type="Rhea" id="RHEA:76156"/>
    </physiologicalReaction>
</comment>
<comment type="cofactor">
    <cofactor evidence="3">
        <name>heme</name>
        <dbReference type="ChEBI" id="CHEBI:30413"/>
    </cofactor>
</comment>
<comment type="subcellular location">
    <subcellularLocation>
        <location>Mitochondrion membrane</location>
    </subcellularLocation>
</comment>
<comment type="tissue specificity">
    <text evidence="5">Expressed in the adrenal cortex and in different brain tissues, including hippocampus, hypothalamus, cerebellum, cerebral cortex, and midbrain.</text>
</comment>
<comment type="developmental stage">
    <text evidence="5">Expression is greater in neonatal, compared to adult rat adrenal glands.</text>
</comment>
<comment type="similarity">
    <text evidence="8">Belongs to the cytochrome P450 family.</text>
</comment>
<accession>P30100</accession>
<reference key="1">
    <citation type="journal article" date="1990" name="Biochem. Biophys. Res. Commun.">
        <title>Molecular cloning and expression of cDNAS encoding rat aldosterone synthase: variants of cytochrome P-450(11 beta).</title>
        <authorList>
            <person name="Matsukawa N."/>
            <person name="Nonaka Y."/>
            <person name="Ying Z."/>
            <person name="Higaki J."/>
            <person name="Ogihara T."/>
            <person name="Okamoto M."/>
        </authorList>
    </citation>
    <scope>NUCLEOTIDE SEQUENCE [MRNA]</scope>
    <source>
        <tissue>Adrenal gland</tissue>
    </source>
</reference>
<reference key="2">
    <citation type="journal article" date="1992" name="J. Steroid Biochem. Mol. Biol.">
        <title>Molecular biology of rat steroid 11 beta-hydroxylase [P450(11 beta)] and aldosterone synthase [P450(11 beta, aldo)].</title>
        <authorList>
            <person name="Okamoto M."/>
            <person name="Nonaka Y."/>
        </authorList>
    </citation>
    <scope>NUCLEOTIDE SEQUENCE</scope>
</reference>
<reference key="3">
    <citation type="journal article" date="1990" name="FEBS Lett.">
        <title>Molecular cloning of a cDNA encoding aldosterone synthase cytochrome P-450 in rat adrenal cortex.</title>
        <authorList>
            <person name="Imai M."/>
            <person name="Shimada H."/>
            <person name="Okada Y."/>
            <person name="Matsushima-Hibiya Y."/>
            <person name="Ogishima T."/>
            <person name="Ishimura Y."/>
        </authorList>
    </citation>
    <scope>NUCLEOTIDE SEQUENCE [MRNA]</scope>
    <source>
        <tissue>Adrenal gland</tissue>
    </source>
</reference>
<reference key="4">
    <citation type="journal article" date="1993" name="J. Biol. Chem.">
        <title>Isolation and characterization of rat CYP11B genes involved in late steps of mineralo- and glucocorticoid syntheses.</title>
        <authorList>
            <person name="Mukai K."/>
            <person name="Imai M."/>
            <person name="Shimada H."/>
            <person name="Ishimura Y."/>
        </authorList>
    </citation>
    <scope>NUCLEOTIDE SEQUENCE [GENOMIC DNA]</scope>
</reference>
<reference key="5">
    <citation type="journal article" date="1993" name="J. Biochem.">
        <title>Three forms of rat CYP11B genes: 11 beta-hydroxylase gene, aldosterone synthase gene, and a novel gene.</title>
        <authorList>
            <person name="Nomura M."/>
            <person name="Morohashi K."/>
            <person name="Kirita S."/>
            <person name="Nonaka Y."/>
            <person name="Okamoto M."/>
            <person name="Nawata H."/>
            <person name="Omura T."/>
        </authorList>
    </citation>
    <scope>NUCLEOTIDE SEQUENCE</scope>
</reference>
<reference key="6">
    <citation type="journal article" date="1995" name="Mol. Cell. Endocrinol.">
        <title>Cloning and expression of the rat adrenal cytochrome P-450 11B3 (CYP11B3) enzyme cDNA: preferential 18-hydroxylation over 11 beta-hydroxylation of DOC.</title>
        <authorList>
            <person name="Zhou M.Y."/>
            <person name="Gomez-Sanchez E.P."/>
            <person name="Foecking M.F."/>
            <person name="Gomez-Sanchez C.E."/>
        </authorList>
    </citation>
    <scope>FUNCTION</scope>
    <scope>CATALYTIC ACTIVITY</scope>
    <scope>TISSUE SPECIFICITY</scope>
    <scope>DEVELOPMENTAL STAGE</scope>
</reference>
<reference key="7">
    <citation type="journal article" date="1989" name="J. Biol. Chem.">
        <title>Isolation of aldosterone synthase cytochrome P-450 from zona glomerulosa mitochondria of rat adrenal cortex.</title>
        <authorList>
            <person name="Ogishima T."/>
            <person name="Mitani F."/>
            <person name="Ishimura Y."/>
        </authorList>
    </citation>
    <scope>PROTEIN SEQUENCE OF 25-44</scope>
    <source>
        <strain>Sprague-Dawley</strain>
        <tissue>Adrenal gland</tissue>
    </source>
</reference>
<protein>
    <recommendedName>
        <fullName>Cytochrome P450 11B3, mitochondrial</fullName>
    </recommendedName>
    <alternativeName>
        <fullName>CYPXIB3</fullName>
    </alternativeName>
    <alternativeName>
        <fullName evidence="7">Cytochrome P-450 11B3</fullName>
        <shortName evidence="7">CYP11B3</shortName>
    </alternativeName>
    <alternativeName>
        <fullName evidence="6">Cytochrome P450-Aldo-2</fullName>
    </alternativeName>
    <alternativeName>
        <fullName>Steroid 11-beta-hydroxylase</fullName>
        <ecNumber evidence="5">1.14.15.4</ecNumber>
    </alternativeName>
</protein>
<dbReference type="EC" id="1.14.15.4" evidence="5"/>
<dbReference type="EMBL" id="D00568">
    <property type="protein sequence ID" value="BAA00445.1"/>
    <property type="molecule type" value="mRNA"/>
</dbReference>
<dbReference type="EMBL" id="X52766">
    <property type="protein sequence ID" value="CAA36978.1"/>
    <property type="molecule type" value="mRNA"/>
</dbReference>
<dbReference type="EMBL" id="D14097">
    <property type="protein sequence ID" value="BAA03172.1"/>
    <property type="molecule type" value="Genomic_DNA"/>
</dbReference>
<dbReference type="PIR" id="JX0252">
    <property type="entry name" value="JX0252"/>
</dbReference>
<dbReference type="SMR" id="P30100"/>
<dbReference type="FunCoup" id="P30100">
    <property type="interactions" value="15"/>
</dbReference>
<dbReference type="STRING" id="10116.ENSRNOP00000049722"/>
<dbReference type="PaxDb" id="10116-ENSRNOP00000049722"/>
<dbReference type="UCSC" id="RGD:727886">
    <property type="organism name" value="rat"/>
</dbReference>
<dbReference type="AGR" id="RGD:2454"/>
<dbReference type="RGD" id="727886">
    <property type="gene designation" value="Cyp11b3"/>
</dbReference>
<dbReference type="eggNOG" id="KOG0159">
    <property type="taxonomic scope" value="Eukaryota"/>
</dbReference>
<dbReference type="InParanoid" id="P30100"/>
<dbReference type="Reactome" id="R-RNO-194002">
    <property type="pathway name" value="Glucocorticoid biosynthesis"/>
</dbReference>
<dbReference type="Reactome" id="R-RNO-211976">
    <property type="pathway name" value="Endogenous sterols"/>
</dbReference>
<dbReference type="PRO" id="PR:P30100"/>
<dbReference type="Proteomes" id="UP000002494">
    <property type="component" value="Unplaced"/>
</dbReference>
<dbReference type="GO" id="GO:0005743">
    <property type="term" value="C:mitochondrial inner membrane"/>
    <property type="evidence" value="ECO:0000318"/>
    <property type="project" value="GO_Central"/>
</dbReference>
<dbReference type="GO" id="GO:0005739">
    <property type="term" value="C:mitochondrion"/>
    <property type="evidence" value="ECO:0000266"/>
    <property type="project" value="RGD"/>
</dbReference>
<dbReference type="GO" id="GO:0047783">
    <property type="term" value="F:corticosterone 18-monooxygenase activity"/>
    <property type="evidence" value="ECO:0000314"/>
    <property type="project" value="RGD"/>
</dbReference>
<dbReference type="GO" id="GO:0020037">
    <property type="term" value="F:heme binding"/>
    <property type="evidence" value="ECO:0000266"/>
    <property type="project" value="RGD"/>
</dbReference>
<dbReference type="GO" id="GO:0005506">
    <property type="term" value="F:iron ion binding"/>
    <property type="evidence" value="ECO:0007669"/>
    <property type="project" value="InterPro"/>
</dbReference>
<dbReference type="GO" id="GO:0004507">
    <property type="term" value="F:steroid 11-beta-monooxygenase activity"/>
    <property type="evidence" value="ECO:0000314"/>
    <property type="project" value="RGD"/>
</dbReference>
<dbReference type="GO" id="GO:0030325">
    <property type="term" value="P:adrenal gland development"/>
    <property type="evidence" value="ECO:0000270"/>
    <property type="project" value="RGD"/>
</dbReference>
<dbReference type="GO" id="GO:0032342">
    <property type="term" value="P:aldosterone biosynthetic process"/>
    <property type="evidence" value="ECO:0000266"/>
    <property type="project" value="RGD"/>
</dbReference>
<dbReference type="GO" id="GO:0006700">
    <property type="term" value="P:C21-steroid hormone biosynthetic process"/>
    <property type="evidence" value="ECO:0000266"/>
    <property type="project" value="RGD"/>
</dbReference>
<dbReference type="GO" id="GO:0032870">
    <property type="term" value="P:cellular response to hormone stimulus"/>
    <property type="evidence" value="ECO:0000266"/>
    <property type="project" value="RGD"/>
</dbReference>
<dbReference type="GO" id="GO:0071375">
    <property type="term" value="P:cellular response to peptide hormone stimulus"/>
    <property type="evidence" value="ECO:0000318"/>
    <property type="project" value="GO_Central"/>
</dbReference>
<dbReference type="GO" id="GO:0035865">
    <property type="term" value="P:cellular response to potassium ion"/>
    <property type="evidence" value="ECO:0000266"/>
    <property type="project" value="RGD"/>
</dbReference>
<dbReference type="GO" id="GO:0008203">
    <property type="term" value="P:cholesterol metabolic process"/>
    <property type="evidence" value="ECO:0000318"/>
    <property type="project" value="GO_Central"/>
</dbReference>
<dbReference type="GO" id="GO:0034651">
    <property type="term" value="P:cortisol biosynthetic process"/>
    <property type="evidence" value="ECO:0000266"/>
    <property type="project" value="RGD"/>
</dbReference>
<dbReference type="GO" id="GO:0034650">
    <property type="term" value="P:cortisol metabolic process"/>
    <property type="evidence" value="ECO:0000318"/>
    <property type="project" value="GO_Central"/>
</dbReference>
<dbReference type="GO" id="GO:0042756">
    <property type="term" value="P:drinking behavior"/>
    <property type="evidence" value="ECO:0000266"/>
    <property type="project" value="RGD"/>
</dbReference>
<dbReference type="GO" id="GO:0006704">
    <property type="term" value="P:glucocorticoid biosynthetic process"/>
    <property type="evidence" value="ECO:0000318"/>
    <property type="project" value="GO_Central"/>
</dbReference>
<dbReference type="GO" id="GO:0050801">
    <property type="term" value="P:monoatomic ion homeostasis"/>
    <property type="evidence" value="ECO:0000266"/>
    <property type="project" value="RGD"/>
</dbReference>
<dbReference type="GO" id="GO:0055075">
    <property type="term" value="P:potassium ion homeostasis"/>
    <property type="evidence" value="ECO:0000266"/>
    <property type="project" value="RGD"/>
</dbReference>
<dbReference type="GO" id="GO:0002017">
    <property type="term" value="P:regulation of blood volume by renal aldosterone"/>
    <property type="evidence" value="ECO:0000266"/>
    <property type="project" value="RGD"/>
</dbReference>
<dbReference type="GO" id="GO:0001991">
    <property type="term" value="P:regulation of systemic arterial blood pressure by circulatory renin-angiotensin"/>
    <property type="evidence" value="ECO:0000266"/>
    <property type="project" value="RGD"/>
</dbReference>
<dbReference type="GO" id="GO:0043434">
    <property type="term" value="P:response to peptide hormone"/>
    <property type="evidence" value="ECO:0000270"/>
    <property type="project" value="RGD"/>
</dbReference>
<dbReference type="GO" id="GO:0055078">
    <property type="term" value="P:sodium ion homeostasis"/>
    <property type="evidence" value="ECO:0000266"/>
    <property type="project" value="RGD"/>
</dbReference>
<dbReference type="GO" id="GO:0008202">
    <property type="term" value="P:steroid metabolic process"/>
    <property type="evidence" value="ECO:0000314"/>
    <property type="project" value="RGD"/>
</dbReference>
<dbReference type="FunFam" id="1.10.630.10:FF:000015">
    <property type="entry name" value="Cholesterol side-chain cleavage enzyme, mitochondrial"/>
    <property type="match status" value="1"/>
</dbReference>
<dbReference type="Gene3D" id="1.10.630.10">
    <property type="entry name" value="Cytochrome P450"/>
    <property type="match status" value="1"/>
</dbReference>
<dbReference type="InterPro" id="IPR050479">
    <property type="entry name" value="CYP11_CYP27_families"/>
</dbReference>
<dbReference type="InterPro" id="IPR001128">
    <property type="entry name" value="Cyt_P450"/>
</dbReference>
<dbReference type="InterPro" id="IPR017972">
    <property type="entry name" value="Cyt_P450_CS"/>
</dbReference>
<dbReference type="InterPro" id="IPR002399">
    <property type="entry name" value="Cyt_P450_mitochondrial"/>
</dbReference>
<dbReference type="InterPro" id="IPR036396">
    <property type="entry name" value="Cyt_P450_sf"/>
</dbReference>
<dbReference type="PANTHER" id="PTHR24279">
    <property type="entry name" value="CYTOCHROME P450"/>
    <property type="match status" value="1"/>
</dbReference>
<dbReference type="PANTHER" id="PTHR24279:SF1">
    <property type="entry name" value="CYTOCHROME P450 11B2, MITOCHONDRIAL"/>
    <property type="match status" value="1"/>
</dbReference>
<dbReference type="Pfam" id="PF00067">
    <property type="entry name" value="p450"/>
    <property type="match status" value="1"/>
</dbReference>
<dbReference type="PRINTS" id="PR00408">
    <property type="entry name" value="MITP450"/>
</dbReference>
<dbReference type="PRINTS" id="PR00385">
    <property type="entry name" value="P450"/>
</dbReference>
<dbReference type="SUPFAM" id="SSF48264">
    <property type="entry name" value="Cytochrome P450"/>
    <property type="match status" value="1"/>
</dbReference>
<dbReference type="PROSITE" id="PS00086">
    <property type="entry name" value="CYTOCHROME_P450"/>
    <property type="match status" value="1"/>
</dbReference>
<sequence length="500" mass="57122">MALRVTADVWLARPWQCLHRTRALGTTATLAPKTLKPFEAIPQYSRNKWLKMIQILREQGQENLHLEMHQAFQELGPIFRHSAGGAQIVSVMLPEDAEKLHQVESILPRRMHLEPWVAHRELRGLRRGVFLLNGAEWRFNRLKLNPNVLSPKAVQNFVPMVDEVARDFLEALKKKVRQNARGSLTMDVQQSLFNYTIEASNFALFGERLGLLGHDLNPGSLKFIHALHSMFKSTTQLLFLPRSLTRWTSTQVWKEHFDAWDVISEYANRCIWKVHQELRLGSSQTYSGIVAALITQGALPLDAIKANSMKLTAGSVDTTAIPLVMTLFELARNPDVQQALRQETLAAEASIAANPQKAMSDLPLLRAALKETLRLYPVGGFLERILNSDLVLQNYHVPAGTLVLLYLYSMGRNPAVFPRPERYMPQRWLERKRSFQHLAFGFGVRQCLGRRLAEVEMLLLLHHMLKTFQVETLRQEDVQMAYRFVLMPSSSPVLTFRPIS</sequence>